<evidence type="ECO:0000255" key="1">
    <source>
        <dbReference type="HAMAP-Rule" id="MF_00210"/>
    </source>
</evidence>
<accession>Q5HP79</accession>
<keyword id="KW-0028">Amino-acid biosynthesis</keyword>
<keyword id="KW-0057">Aromatic amino acid biosynthesis</keyword>
<keyword id="KW-0963">Cytoplasm</keyword>
<keyword id="KW-1185">Reference proteome</keyword>
<keyword id="KW-0808">Transferase</keyword>
<dbReference type="EC" id="2.5.1.19" evidence="1"/>
<dbReference type="EMBL" id="CP000029">
    <property type="protein sequence ID" value="AAW54418.1"/>
    <property type="molecule type" value="Genomic_DNA"/>
</dbReference>
<dbReference type="RefSeq" id="WP_002456189.1">
    <property type="nucleotide sequence ID" value="NC_002976.3"/>
</dbReference>
<dbReference type="SMR" id="Q5HP79"/>
<dbReference type="STRING" id="176279.SERP1034"/>
<dbReference type="KEGG" id="ser:SERP1034"/>
<dbReference type="eggNOG" id="COG0128">
    <property type="taxonomic scope" value="Bacteria"/>
</dbReference>
<dbReference type="HOGENOM" id="CLU_024321_0_1_9"/>
<dbReference type="UniPathway" id="UPA00053">
    <property type="reaction ID" value="UER00089"/>
</dbReference>
<dbReference type="Proteomes" id="UP000000531">
    <property type="component" value="Chromosome"/>
</dbReference>
<dbReference type="GO" id="GO:0005737">
    <property type="term" value="C:cytoplasm"/>
    <property type="evidence" value="ECO:0007669"/>
    <property type="project" value="UniProtKB-SubCell"/>
</dbReference>
<dbReference type="GO" id="GO:0003866">
    <property type="term" value="F:3-phosphoshikimate 1-carboxyvinyltransferase activity"/>
    <property type="evidence" value="ECO:0007669"/>
    <property type="project" value="UniProtKB-UniRule"/>
</dbReference>
<dbReference type="GO" id="GO:0008652">
    <property type="term" value="P:amino acid biosynthetic process"/>
    <property type="evidence" value="ECO:0007669"/>
    <property type="project" value="UniProtKB-KW"/>
</dbReference>
<dbReference type="GO" id="GO:0009073">
    <property type="term" value="P:aromatic amino acid family biosynthetic process"/>
    <property type="evidence" value="ECO:0007669"/>
    <property type="project" value="UniProtKB-KW"/>
</dbReference>
<dbReference type="GO" id="GO:0009423">
    <property type="term" value="P:chorismate biosynthetic process"/>
    <property type="evidence" value="ECO:0007669"/>
    <property type="project" value="UniProtKB-UniRule"/>
</dbReference>
<dbReference type="CDD" id="cd01556">
    <property type="entry name" value="EPSP_synthase"/>
    <property type="match status" value="1"/>
</dbReference>
<dbReference type="FunFam" id="3.65.10.10:FF:000005">
    <property type="entry name" value="3-phosphoshikimate 1-carboxyvinyltransferase"/>
    <property type="match status" value="1"/>
</dbReference>
<dbReference type="FunFam" id="3.65.10.10:FF:000006">
    <property type="entry name" value="3-phosphoshikimate 1-carboxyvinyltransferase"/>
    <property type="match status" value="1"/>
</dbReference>
<dbReference type="Gene3D" id="3.65.10.10">
    <property type="entry name" value="Enolpyruvate transferase domain"/>
    <property type="match status" value="2"/>
</dbReference>
<dbReference type="HAMAP" id="MF_00210">
    <property type="entry name" value="EPSP_synth"/>
    <property type="match status" value="1"/>
</dbReference>
<dbReference type="InterPro" id="IPR001986">
    <property type="entry name" value="Enolpyruvate_Tfrase_dom"/>
</dbReference>
<dbReference type="InterPro" id="IPR036968">
    <property type="entry name" value="Enolpyruvate_Tfrase_sf"/>
</dbReference>
<dbReference type="InterPro" id="IPR006264">
    <property type="entry name" value="EPSP_synthase"/>
</dbReference>
<dbReference type="InterPro" id="IPR023193">
    <property type="entry name" value="EPSP_synthase_CS"/>
</dbReference>
<dbReference type="InterPro" id="IPR013792">
    <property type="entry name" value="RNA3'P_cycl/enolpyr_Trfase_a/b"/>
</dbReference>
<dbReference type="NCBIfam" id="TIGR01356">
    <property type="entry name" value="aroA"/>
    <property type="match status" value="1"/>
</dbReference>
<dbReference type="PANTHER" id="PTHR21090">
    <property type="entry name" value="AROM/DEHYDROQUINATE SYNTHASE"/>
    <property type="match status" value="1"/>
</dbReference>
<dbReference type="PANTHER" id="PTHR21090:SF5">
    <property type="entry name" value="PENTAFUNCTIONAL AROM POLYPEPTIDE"/>
    <property type="match status" value="1"/>
</dbReference>
<dbReference type="Pfam" id="PF00275">
    <property type="entry name" value="EPSP_synthase"/>
    <property type="match status" value="1"/>
</dbReference>
<dbReference type="PIRSF" id="PIRSF000505">
    <property type="entry name" value="EPSPS"/>
    <property type="match status" value="1"/>
</dbReference>
<dbReference type="SUPFAM" id="SSF55205">
    <property type="entry name" value="EPT/RTPC-like"/>
    <property type="match status" value="1"/>
</dbReference>
<dbReference type="PROSITE" id="PS00104">
    <property type="entry name" value="EPSP_SYNTHASE_1"/>
    <property type="match status" value="1"/>
</dbReference>
<dbReference type="PROSITE" id="PS00885">
    <property type="entry name" value="EPSP_SYNTHASE_2"/>
    <property type="match status" value="1"/>
</dbReference>
<gene>
    <name evidence="1" type="primary">aroA</name>
    <name type="ordered locus">SERP1034</name>
</gene>
<feature type="chain" id="PRO_0000088298" description="3-phosphoshikimate 1-carboxyvinyltransferase">
    <location>
        <begin position="1"/>
        <end position="433"/>
    </location>
</feature>
<feature type="active site" description="Proton acceptor" evidence="1">
    <location>
        <position position="317"/>
    </location>
</feature>
<feature type="binding site" evidence="1">
    <location>
        <position position="23"/>
    </location>
    <ligand>
        <name>3-phosphoshikimate</name>
        <dbReference type="ChEBI" id="CHEBI:145989"/>
    </ligand>
</feature>
<feature type="binding site" evidence="1">
    <location>
        <position position="23"/>
    </location>
    <ligand>
        <name>phosphoenolpyruvate</name>
        <dbReference type="ChEBI" id="CHEBI:58702"/>
    </ligand>
</feature>
<feature type="binding site" evidence="1">
    <location>
        <position position="24"/>
    </location>
    <ligand>
        <name>3-phosphoshikimate</name>
        <dbReference type="ChEBI" id="CHEBI:145989"/>
    </ligand>
</feature>
<feature type="binding site" evidence="1">
    <location>
        <position position="28"/>
    </location>
    <ligand>
        <name>3-phosphoshikimate</name>
        <dbReference type="ChEBI" id="CHEBI:145989"/>
    </ligand>
</feature>
<feature type="binding site" evidence="1">
    <location>
        <position position="95"/>
    </location>
    <ligand>
        <name>phosphoenolpyruvate</name>
        <dbReference type="ChEBI" id="CHEBI:58702"/>
    </ligand>
</feature>
<feature type="binding site" evidence="1">
    <location>
        <position position="123"/>
    </location>
    <ligand>
        <name>phosphoenolpyruvate</name>
        <dbReference type="ChEBI" id="CHEBI:58702"/>
    </ligand>
</feature>
<feature type="binding site" evidence="1">
    <location>
        <position position="167"/>
    </location>
    <ligand>
        <name>3-phosphoshikimate</name>
        <dbReference type="ChEBI" id="CHEBI:145989"/>
    </ligand>
</feature>
<feature type="binding site" evidence="1">
    <location>
        <position position="169"/>
    </location>
    <ligand>
        <name>3-phosphoshikimate</name>
        <dbReference type="ChEBI" id="CHEBI:145989"/>
    </ligand>
</feature>
<feature type="binding site" evidence="1">
    <location>
        <position position="169"/>
    </location>
    <ligand>
        <name>phosphoenolpyruvate</name>
        <dbReference type="ChEBI" id="CHEBI:58702"/>
    </ligand>
</feature>
<feature type="binding site" evidence="1">
    <location>
        <position position="317"/>
    </location>
    <ligand>
        <name>3-phosphoshikimate</name>
        <dbReference type="ChEBI" id="CHEBI:145989"/>
    </ligand>
</feature>
<feature type="binding site" evidence="1">
    <location>
        <position position="344"/>
    </location>
    <ligand>
        <name>3-phosphoshikimate</name>
        <dbReference type="ChEBI" id="CHEBI:145989"/>
    </ligand>
</feature>
<feature type="binding site" evidence="1">
    <location>
        <position position="348"/>
    </location>
    <ligand>
        <name>phosphoenolpyruvate</name>
        <dbReference type="ChEBI" id="CHEBI:58702"/>
    </ligand>
</feature>
<feature type="binding site" evidence="1">
    <location>
        <position position="390"/>
    </location>
    <ligand>
        <name>phosphoenolpyruvate</name>
        <dbReference type="ChEBI" id="CHEBI:58702"/>
    </ligand>
</feature>
<reference key="1">
    <citation type="journal article" date="2005" name="J. Bacteriol.">
        <title>Insights on evolution of virulence and resistance from the complete genome analysis of an early methicillin-resistant Staphylococcus aureus strain and a biofilm-producing methicillin-resistant Staphylococcus epidermidis strain.</title>
        <authorList>
            <person name="Gill S.R."/>
            <person name="Fouts D.E."/>
            <person name="Archer G.L."/>
            <person name="Mongodin E.F."/>
            <person name="DeBoy R.T."/>
            <person name="Ravel J."/>
            <person name="Paulsen I.T."/>
            <person name="Kolonay J.F."/>
            <person name="Brinkac L.M."/>
            <person name="Beanan M.J."/>
            <person name="Dodson R.J."/>
            <person name="Daugherty S.C."/>
            <person name="Madupu R."/>
            <person name="Angiuoli S.V."/>
            <person name="Durkin A.S."/>
            <person name="Haft D.H."/>
            <person name="Vamathevan J.J."/>
            <person name="Khouri H."/>
            <person name="Utterback T.R."/>
            <person name="Lee C."/>
            <person name="Dimitrov G."/>
            <person name="Jiang L."/>
            <person name="Qin H."/>
            <person name="Weidman J."/>
            <person name="Tran K."/>
            <person name="Kang K.H."/>
            <person name="Hance I.R."/>
            <person name="Nelson K.E."/>
            <person name="Fraser C.M."/>
        </authorList>
    </citation>
    <scope>NUCLEOTIDE SEQUENCE [LARGE SCALE GENOMIC DNA]</scope>
    <source>
        <strain>ATCC 35984 / DSM 28319 / BCRC 17069 / CCUG 31568 / BM 3577 / RP62A</strain>
    </source>
</reference>
<sequence length="433" mass="47037">MNNSEIININGPFKGEIEVPGDKSMTHRAIMLASLAKGISTIYEPLMGEDCRRTMDIFKLLGVTIEEQDNSIIINSPGYQNFITPHQVLYTGNSGTTTRLLAGLLSGLGIESVLSGDVSIGKRPMDRVMKPLLKMNANISGIDNNYTPLIIKPSTIKGINYQMEVASAQVKSAILLASLFSKEATTLTEFDVSRNHTETLFAHFNIPISIQGKTIQTIPYAIEHIQPRDFHVPGDISSAAFFIVAALITPGSDITIHNVGINPTRSGIIDIVKQMGGNIELSNVSKGAEPTASIHVKYTPNLNAVTIKGDLVPRAIDELPVIALLCTQASNSCIIKNAEELKVKETNRIDTTADMLNLLGFNLQPTHDGLIIHPSEFRSNATVDSQTDHRIGMMLAVASLLSSEPLKIEQFDAVNVSFPGFLPKLKLLENEGK</sequence>
<comment type="function">
    <text evidence="1">Catalyzes the transfer of the enolpyruvyl moiety of phosphoenolpyruvate (PEP) to the 5-hydroxyl of shikimate-3-phosphate (S3P) to produce enolpyruvyl shikimate-3-phosphate and inorganic phosphate.</text>
</comment>
<comment type="catalytic activity">
    <reaction evidence="1">
        <text>3-phosphoshikimate + phosphoenolpyruvate = 5-O-(1-carboxyvinyl)-3-phosphoshikimate + phosphate</text>
        <dbReference type="Rhea" id="RHEA:21256"/>
        <dbReference type="ChEBI" id="CHEBI:43474"/>
        <dbReference type="ChEBI" id="CHEBI:57701"/>
        <dbReference type="ChEBI" id="CHEBI:58702"/>
        <dbReference type="ChEBI" id="CHEBI:145989"/>
        <dbReference type="EC" id="2.5.1.19"/>
    </reaction>
    <physiologicalReaction direction="left-to-right" evidence="1">
        <dbReference type="Rhea" id="RHEA:21257"/>
    </physiologicalReaction>
</comment>
<comment type="pathway">
    <text evidence="1">Metabolic intermediate biosynthesis; chorismate biosynthesis; chorismate from D-erythrose 4-phosphate and phosphoenolpyruvate: step 6/7.</text>
</comment>
<comment type="subunit">
    <text evidence="1">Monomer.</text>
</comment>
<comment type="subcellular location">
    <subcellularLocation>
        <location evidence="1">Cytoplasm</location>
    </subcellularLocation>
</comment>
<comment type="similarity">
    <text evidence="1">Belongs to the EPSP synthase family.</text>
</comment>
<organism>
    <name type="scientific">Staphylococcus epidermidis (strain ATCC 35984 / DSM 28319 / BCRC 17069 / CCUG 31568 / BM 3577 / RP62A)</name>
    <dbReference type="NCBI Taxonomy" id="176279"/>
    <lineage>
        <taxon>Bacteria</taxon>
        <taxon>Bacillati</taxon>
        <taxon>Bacillota</taxon>
        <taxon>Bacilli</taxon>
        <taxon>Bacillales</taxon>
        <taxon>Staphylococcaceae</taxon>
        <taxon>Staphylococcus</taxon>
    </lineage>
</organism>
<protein>
    <recommendedName>
        <fullName evidence="1">3-phosphoshikimate 1-carboxyvinyltransferase</fullName>
        <ecNumber evidence="1">2.5.1.19</ecNumber>
    </recommendedName>
    <alternativeName>
        <fullName evidence="1">5-enolpyruvylshikimate-3-phosphate synthase</fullName>
        <shortName evidence="1">EPSP synthase</shortName>
        <shortName evidence="1">EPSPS</shortName>
    </alternativeName>
</protein>
<name>AROA_STAEQ</name>
<proteinExistence type="inferred from homology"/>